<sequence length="117" mass="12664">MDKKSARLRRAARTRHQIRHNGVHRLCVHRTPRHIYAQVIAPNGSEVVAAASTVEVELAKDLKGTGNVDAAVAIGKVIAERAKAKGVSEVAFDRSGFKYHGRVKALADAAREGGLQF</sequence>
<proteinExistence type="inferred from homology"/>
<dbReference type="EMBL" id="CP001339">
    <property type="protein sequence ID" value="ACL73388.1"/>
    <property type="molecule type" value="Genomic_DNA"/>
</dbReference>
<dbReference type="RefSeq" id="WP_012638864.1">
    <property type="nucleotide sequence ID" value="NC_011901.1"/>
</dbReference>
<dbReference type="SMR" id="B8GV42"/>
<dbReference type="STRING" id="396588.Tgr7_2308"/>
<dbReference type="KEGG" id="tgr:Tgr7_2308"/>
<dbReference type="eggNOG" id="COG0256">
    <property type="taxonomic scope" value="Bacteria"/>
</dbReference>
<dbReference type="HOGENOM" id="CLU_098841_0_1_6"/>
<dbReference type="OrthoDB" id="9810939at2"/>
<dbReference type="Proteomes" id="UP000002383">
    <property type="component" value="Chromosome"/>
</dbReference>
<dbReference type="GO" id="GO:0022625">
    <property type="term" value="C:cytosolic large ribosomal subunit"/>
    <property type="evidence" value="ECO:0007669"/>
    <property type="project" value="TreeGrafter"/>
</dbReference>
<dbReference type="GO" id="GO:0008097">
    <property type="term" value="F:5S rRNA binding"/>
    <property type="evidence" value="ECO:0007669"/>
    <property type="project" value="TreeGrafter"/>
</dbReference>
<dbReference type="GO" id="GO:0003735">
    <property type="term" value="F:structural constituent of ribosome"/>
    <property type="evidence" value="ECO:0007669"/>
    <property type="project" value="InterPro"/>
</dbReference>
<dbReference type="GO" id="GO:0006412">
    <property type="term" value="P:translation"/>
    <property type="evidence" value="ECO:0007669"/>
    <property type="project" value="UniProtKB-UniRule"/>
</dbReference>
<dbReference type="CDD" id="cd00432">
    <property type="entry name" value="Ribosomal_L18_L5e"/>
    <property type="match status" value="1"/>
</dbReference>
<dbReference type="FunFam" id="3.30.420.100:FF:000001">
    <property type="entry name" value="50S ribosomal protein L18"/>
    <property type="match status" value="1"/>
</dbReference>
<dbReference type="Gene3D" id="3.30.420.100">
    <property type="match status" value="1"/>
</dbReference>
<dbReference type="HAMAP" id="MF_01337_B">
    <property type="entry name" value="Ribosomal_uL18_B"/>
    <property type="match status" value="1"/>
</dbReference>
<dbReference type="InterPro" id="IPR004389">
    <property type="entry name" value="Ribosomal_uL18_bac-type"/>
</dbReference>
<dbReference type="InterPro" id="IPR005484">
    <property type="entry name" value="Ribosomal_uL18_bac/euk"/>
</dbReference>
<dbReference type="NCBIfam" id="TIGR00060">
    <property type="entry name" value="L18_bact"/>
    <property type="match status" value="1"/>
</dbReference>
<dbReference type="PANTHER" id="PTHR12899">
    <property type="entry name" value="39S RIBOSOMAL PROTEIN L18, MITOCHONDRIAL"/>
    <property type="match status" value="1"/>
</dbReference>
<dbReference type="PANTHER" id="PTHR12899:SF3">
    <property type="entry name" value="LARGE RIBOSOMAL SUBUNIT PROTEIN UL18M"/>
    <property type="match status" value="1"/>
</dbReference>
<dbReference type="Pfam" id="PF00861">
    <property type="entry name" value="Ribosomal_L18p"/>
    <property type="match status" value="1"/>
</dbReference>
<dbReference type="SUPFAM" id="SSF53137">
    <property type="entry name" value="Translational machinery components"/>
    <property type="match status" value="1"/>
</dbReference>
<feature type="chain" id="PRO_1000166257" description="Large ribosomal subunit protein uL18">
    <location>
        <begin position="1"/>
        <end position="117"/>
    </location>
</feature>
<name>RL18_THISH</name>
<reference key="1">
    <citation type="journal article" date="2011" name="Stand. Genomic Sci.">
        <title>Complete genome sequence of 'Thioalkalivibrio sulfidophilus' HL-EbGr7.</title>
        <authorList>
            <person name="Muyzer G."/>
            <person name="Sorokin D.Y."/>
            <person name="Mavromatis K."/>
            <person name="Lapidus A."/>
            <person name="Clum A."/>
            <person name="Ivanova N."/>
            <person name="Pati A."/>
            <person name="d'Haeseleer P."/>
            <person name="Woyke T."/>
            <person name="Kyrpides N.C."/>
        </authorList>
    </citation>
    <scope>NUCLEOTIDE SEQUENCE [LARGE SCALE GENOMIC DNA]</scope>
    <source>
        <strain>HL-EbGR7</strain>
    </source>
</reference>
<comment type="function">
    <text evidence="1">This is one of the proteins that bind and probably mediate the attachment of the 5S RNA into the large ribosomal subunit, where it forms part of the central protuberance.</text>
</comment>
<comment type="subunit">
    <text evidence="1">Part of the 50S ribosomal subunit; part of the 5S rRNA/L5/L18/L25 subcomplex. Contacts the 5S and 23S rRNAs.</text>
</comment>
<comment type="similarity">
    <text evidence="1">Belongs to the universal ribosomal protein uL18 family.</text>
</comment>
<organism>
    <name type="scientific">Thioalkalivibrio sulfidiphilus (strain HL-EbGR7)</name>
    <dbReference type="NCBI Taxonomy" id="396588"/>
    <lineage>
        <taxon>Bacteria</taxon>
        <taxon>Pseudomonadati</taxon>
        <taxon>Pseudomonadota</taxon>
        <taxon>Gammaproteobacteria</taxon>
        <taxon>Chromatiales</taxon>
        <taxon>Ectothiorhodospiraceae</taxon>
        <taxon>Thioalkalivibrio</taxon>
    </lineage>
</organism>
<gene>
    <name evidence="1" type="primary">rplR</name>
    <name type="ordered locus">Tgr7_2308</name>
</gene>
<evidence type="ECO:0000255" key="1">
    <source>
        <dbReference type="HAMAP-Rule" id="MF_01337"/>
    </source>
</evidence>
<evidence type="ECO:0000305" key="2"/>
<keyword id="KW-1185">Reference proteome</keyword>
<keyword id="KW-0687">Ribonucleoprotein</keyword>
<keyword id="KW-0689">Ribosomal protein</keyword>
<keyword id="KW-0694">RNA-binding</keyword>
<keyword id="KW-0699">rRNA-binding</keyword>
<accession>B8GV42</accession>
<protein>
    <recommendedName>
        <fullName evidence="1">Large ribosomal subunit protein uL18</fullName>
    </recommendedName>
    <alternativeName>
        <fullName evidence="2">50S ribosomal protein L18</fullName>
    </alternativeName>
</protein>